<feature type="chain" id="PRO_0000243857" description="Small ribosomal subunit protein bS16">
    <location>
        <begin position="1"/>
        <end position="116"/>
    </location>
</feature>
<feature type="region of interest" description="Disordered" evidence="2">
    <location>
        <begin position="88"/>
        <end position="116"/>
    </location>
</feature>
<feature type="compositionally biased region" description="Basic and acidic residues" evidence="2">
    <location>
        <begin position="99"/>
        <end position="110"/>
    </location>
</feature>
<sequence length="116" mass="12937">MAMKIRLARGGSKKRPHYSIVASDSRMPRDGRFLEKLGTYNPLLAKDSEDRIKMNLERVQYWLAQGAQPTDRVARFLEAAGLKEKAVRNNPKAAVPGKRMAELAKKKADRAAASAE</sequence>
<keyword id="KW-1185">Reference proteome</keyword>
<keyword id="KW-0687">Ribonucleoprotein</keyword>
<keyword id="KW-0689">Ribosomal protein</keyword>
<protein>
    <recommendedName>
        <fullName evidence="1">Small ribosomal subunit protein bS16</fullName>
    </recommendedName>
    <alternativeName>
        <fullName evidence="3">30S ribosomal protein S16</fullName>
    </alternativeName>
</protein>
<name>RS16_CERS4</name>
<gene>
    <name evidence="1" type="primary">rpsP</name>
    <name type="ordered locus">RHOS4_26640</name>
    <name type="ORF">RSP_1048</name>
</gene>
<reference key="1">
    <citation type="submission" date="2005-09" db="EMBL/GenBank/DDBJ databases">
        <title>Complete sequence of chromosome 1 of Rhodobacter sphaeroides 2.4.1.</title>
        <authorList>
            <person name="Copeland A."/>
            <person name="Lucas S."/>
            <person name="Lapidus A."/>
            <person name="Barry K."/>
            <person name="Detter J.C."/>
            <person name="Glavina T."/>
            <person name="Hammon N."/>
            <person name="Israni S."/>
            <person name="Pitluck S."/>
            <person name="Richardson P."/>
            <person name="Mackenzie C."/>
            <person name="Choudhary M."/>
            <person name="Larimer F."/>
            <person name="Hauser L.J."/>
            <person name="Land M."/>
            <person name="Donohue T.J."/>
            <person name="Kaplan S."/>
        </authorList>
    </citation>
    <scope>NUCLEOTIDE SEQUENCE [LARGE SCALE GENOMIC DNA]</scope>
    <source>
        <strain>ATCC 17023 / DSM 158 / JCM 6121 / CCUG 31486 / LMG 2827 / NBRC 12203 / NCIMB 8253 / ATH 2.4.1.</strain>
    </source>
</reference>
<accession>Q3IZ02</accession>
<evidence type="ECO:0000255" key="1">
    <source>
        <dbReference type="HAMAP-Rule" id="MF_00385"/>
    </source>
</evidence>
<evidence type="ECO:0000256" key="2">
    <source>
        <dbReference type="SAM" id="MobiDB-lite"/>
    </source>
</evidence>
<evidence type="ECO:0000305" key="3"/>
<dbReference type="EMBL" id="CP000143">
    <property type="protein sequence ID" value="ABA80232.1"/>
    <property type="molecule type" value="Genomic_DNA"/>
</dbReference>
<dbReference type="RefSeq" id="WP_009563092.1">
    <property type="nucleotide sequence ID" value="NZ_CP030271.1"/>
</dbReference>
<dbReference type="RefSeq" id="YP_354133.1">
    <property type="nucleotide sequence ID" value="NC_007493.2"/>
</dbReference>
<dbReference type="SMR" id="Q3IZ02"/>
<dbReference type="STRING" id="272943.RSP_1048"/>
<dbReference type="EnsemblBacteria" id="ABA80232">
    <property type="protein sequence ID" value="ABA80232"/>
    <property type="gene ID" value="RSP_1048"/>
</dbReference>
<dbReference type="GeneID" id="67447821"/>
<dbReference type="KEGG" id="rsp:RSP_1048"/>
<dbReference type="PATRIC" id="fig|272943.9.peg.3022"/>
<dbReference type="eggNOG" id="COG0228">
    <property type="taxonomic scope" value="Bacteria"/>
</dbReference>
<dbReference type="OrthoDB" id="9807878at2"/>
<dbReference type="PhylomeDB" id="Q3IZ02"/>
<dbReference type="Proteomes" id="UP000002703">
    <property type="component" value="Chromosome 1"/>
</dbReference>
<dbReference type="GO" id="GO:0005737">
    <property type="term" value="C:cytoplasm"/>
    <property type="evidence" value="ECO:0007669"/>
    <property type="project" value="UniProtKB-ARBA"/>
</dbReference>
<dbReference type="GO" id="GO:0015935">
    <property type="term" value="C:small ribosomal subunit"/>
    <property type="evidence" value="ECO:0007669"/>
    <property type="project" value="TreeGrafter"/>
</dbReference>
<dbReference type="GO" id="GO:0003735">
    <property type="term" value="F:structural constituent of ribosome"/>
    <property type="evidence" value="ECO:0007669"/>
    <property type="project" value="InterPro"/>
</dbReference>
<dbReference type="GO" id="GO:0006412">
    <property type="term" value="P:translation"/>
    <property type="evidence" value="ECO:0007669"/>
    <property type="project" value="UniProtKB-UniRule"/>
</dbReference>
<dbReference type="Gene3D" id="3.30.1320.10">
    <property type="match status" value="1"/>
</dbReference>
<dbReference type="HAMAP" id="MF_00385">
    <property type="entry name" value="Ribosomal_bS16"/>
    <property type="match status" value="1"/>
</dbReference>
<dbReference type="InterPro" id="IPR000307">
    <property type="entry name" value="Ribosomal_bS16"/>
</dbReference>
<dbReference type="InterPro" id="IPR023803">
    <property type="entry name" value="Ribosomal_bS16_dom_sf"/>
</dbReference>
<dbReference type="NCBIfam" id="TIGR00002">
    <property type="entry name" value="S16"/>
    <property type="match status" value="1"/>
</dbReference>
<dbReference type="PANTHER" id="PTHR12919">
    <property type="entry name" value="30S RIBOSOMAL PROTEIN S16"/>
    <property type="match status" value="1"/>
</dbReference>
<dbReference type="PANTHER" id="PTHR12919:SF20">
    <property type="entry name" value="SMALL RIBOSOMAL SUBUNIT PROTEIN BS16M"/>
    <property type="match status" value="1"/>
</dbReference>
<dbReference type="Pfam" id="PF00886">
    <property type="entry name" value="Ribosomal_S16"/>
    <property type="match status" value="1"/>
</dbReference>
<dbReference type="SUPFAM" id="SSF54565">
    <property type="entry name" value="Ribosomal protein S16"/>
    <property type="match status" value="1"/>
</dbReference>
<proteinExistence type="inferred from homology"/>
<comment type="similarity">
    <text evidence="1">Belongs to the bacterial ribosomal protein bS16 family.</text>
</comment>
<organism>
    <name type="scientific">Cereibacter sphaeroides (strain ATCC 17023 / DSM 158 / JCM 6121 / CCUG 31486 / LMG 2827 / NBRC 12203 / NCIMB 8253 / ATH 2.4.1.)</name>
    <name type="common">Rhodobacter sphaeroides</name>
    <dbReference type="NCBI Taxonomy" id="272943"/>
    <lineage>
        <taxon>Bacteria</taxon>
        <taxon>Pseudomonadati</taxon>
        <taxon>Pseudomonadota</taxon>
        <taxon>Alphaproteobacteria</taxon>
        <taxon>Rhodobacterales</taxon>
        <taxon>Paracoccaceae</taxon>
        <taxon>Cereibacter</taxon>
    </lineage>
</organism>